<dbReference type="EC" id="2.3.2.27" evidence="4"/>
<dbReference type="EMBL" id="BX284601">
    <property type="protein sequence ID" value="CAB02744.2"/>
    <property type="molecule type" value="Genomic_DNA"/>
</dbReference>
<dbReference type="PIR" id="T19350">
    <property type="entry name" value="T19350"/>
</dbReference>
<dbReference type="RefSeq" id="NP_492502.2">
    <property type="nucleotide sequence ID" value="NM_060101.5"/>
</dbReference>
<dbReference type="FunCoup" id="Q93227">
    <property type="interactions" value="13"/>
</dbReference>
<dbReference type="STRING" id="6239.C17E4.3.1"/>
<dbReference type="PaxDb" id="6239-C17E4.3"/>
<dbReference type="EnsemblMetazoa" id="C17E4.3.1">
    <property type="protein sequence ID" value="C17E4.3.1"/>
    <property type="gene ID" value="WBGene00007643"/>
</dbReference>
<dbReference type="GeneID" id="172767"/>
<dbReference type="KEGG" id="cel:CELE_C17E4.3"/>
<dbReference type="UCSC" id="C17E4.3">
    <property type="organism name" value="c. elegans"/>
</dbReference>
<dbReference type="AGR" id="WB:WBGene00007643"/>
<dbReference type="CTD" id="172767"/>
<dbReference type="WormBase" id="C17E4.3">
    <property type="protein sequence ID" value="CE37199"/>
    <property type="gene ID" value="WBGene00007643"/>
    <property type="gene designation" value="marc-3"/>
</dbReference>
<dbReference type="eggNOG" id="KOG1609">
    <property type="taxonomic scope" value="Eukaryota"/>
</dbReference>
<dbReference type="GeneTree" id="ENSGT00940000169010"/>
<dbReference type="HOGENOM" id="CLU_057923_0_0_1"/>
<dbReference type="InParanoid" id="Q93227"/>
<dbReference type="OMA" id="YHFAFEN"/>
<dbReference type="OrthoDB" id="273089at2759"/>
<dbReference type="UniPathway" id="UPA00143"/>
<dbReference type="Proteomes" id="UP000001940">
    <property type="component" value="Chromosome I"/>
</dbReference>
<dbReference type="Bgee" id="WBGene00007643">
    <property type="expression patterns" value="Expressed in germ line (C elegans) and 4 other cell types or tissues"/>
</dbReference>
<dbReference type="GO" id="GO:0010008">
    <property type="term" value="C:endosome membrane"/>
    <property type="evidence" value="ECO:0007669"/>
    <property type="project" value="UniProtKB-SubCell"/>
</dbReference>
<dbReference type="GO" id="GO:0005886">
    <property type="term" value="C:plasma membrane"/>
    <property type="evidence" value="ECO:0007669"/>
    <property type="project" value="UniProtKB-SubCell"/>
</dbReference>
<dbReference type="GO" id="GO:0004842">
    <property type="term" value="F:ubiquitin-protein transferase activity"/>
    <property type="evidence" value="ECO:0000250"/>
    <property type="project" value="WormBase"/>
</dbReference>
<dbReference type="GO" id="GO:0008270">
    <property type="term" value="F:zinc ion binding"/>
    <property type="evidence" value="ECO:0007669"/>
    <property type="project" value="UniProtKB-KW"/>
</dbReference>
<dbReference type="GO" id="GO:0000209">
    <property type="term" value="P:protein polyubiquitination"/>
    <property type="evidence" value="ECO:0000250"/>
    <property type="project" value="WormBase"/>
</dbReference>
<dbReference type="GO" id="GO:0016567">
    <property type="term" value="P:protein ubiquitination"/>
    <property type="evidence" value="ECO:0000318"/>
    <property type="project" value="GO_Central"/>
</dbReference>
<dbReference type="GO" id="GO:0007338">
    <property type="term" value="P:single fertilization"/>
    <property type="evidence" value="ECO:0007669"/>
    <property type="project" value="UniProtKB-KW"/>
</dbReference>
<dbReference type="Gene3D" id="3.30.40.10">
    <property type="entry name" value="Zinc/RING finger domain, C3HC4 (zinc finger)"/>
    <property type="match status" value="1"/>
</dbReference>
<dbReference type="InterPro" id="IPR001841">
    <property type="entry name" value="Znf_RING"/>
</dbReference>
<dbReference type="InterPro" id="IPR011016">
    <property type="entry name" value="Znf_RING-CH"/>
</dbReference>
<dbReference type="InterPro" id="IPR013083">
    <property type="entry name" value="Znf_RING/FYVE/PHD"/>
</dbReference>
<dbReference type="PANTHER" id="PTHR46065">
    <property type="entry name" value="E3 UBIQUITIN-PROTEIN LIGASE MARCH 2/3 FAMILY MEMBER"/>
    <property type="match status" value="1"/>
</dbReference>
<dbReference type="PANTHER" id="PTHR46065:SF5">
    <property type="entry name" value="RING-CH-TYPE DOMAIN-CONTAINING PROTEIN"/>
    <property type="match status" value="1"/>
</dbReference>
<dbReference type="Pfam" id="PF12906">
    <property type="entry name" value="RINGv"/>
    <property type="match status" value="1"/>
</dbReference>
<dbReference type="SMART" id="SM00744">
    <property type="entry name" value="RINGv"/>
    <property type="match status" value="1"/>
</dbReference>
<dbReference type="SUPFAM" id="SSF57850">
    <property type="entry name" value="RING/U-box"/>
    <property type="match status" value="1"/>
</dbReference>
<dbReference type="PROSITE" id="PS50089">
    <property type="entry name" value="ZF_RING_2"/>
    <property type="match status" value="1"/>
</dbReference>
<dbReference type="PROSITE" id="PS51292">
    <property type="entry name" value="ZF_RING_CH"/>
    <property type="match status" value="1"/>
</dbReference>
<evidence type="ECO:0000255" key="1"/>
<evidence type="ECO:0000255" key="2">
    <source>
        <dbReference type="PROSITE-ProRule" id="PRU00623"/>
    </source>
</evidence>
<evidence type="ECO:0000256" key="3">
    <source>
        <dbReference type="SAM" id="MobiDB-lite"/>
    </source>
</evidence>
<evidence type="ECO:0000269" key="4">
    <source>
    </source>
</evidence>
<evidence type="ECO:0000303" key="5">
    <source>
    </source>
</evidence>
<evidence type="ECO:0000305" key="6"/>
<evidence type="ECO:0000312" key="7">
    <source>
        <dbReference type="Proteomes" id="UP000001940"/>
    </source>
</evidence>
<evidence type="ECO:0000312" key="8">
    <source>
        <dbReference type="WormBase" id="C17E4.3"/>
    </source>
</evidence>
<keyword id="KW-1003">Cell membrane</keyword>
<keyword id="KW-0967">Endosome</keyword>
<keyword id="KW-0278">Fertilization</keyword>
<keyword id="KW-0472">Membrane</keyword>
<keyword id="KW-0479">Metal-binding</keyword>
<keyword id="KW-1185">Reference proteome</keyword>
<keyword id="KW-0808">Transferase</keyword>
<keyword id="KW-0812">Transmembrane</keyword>
<keyword id="KW-1133">Transmembrane helix</keyword>
<keyword id="KW-0833">Ubl conjugation pathway</keyword>
<keyword id="KW-0862">Zinc</keyword>
<keyword id="KW-0863">Zinc-finger</keyword>
<gene>
    <name evidence="5 8" type="primary">marc-3</name>
    <name evidence="8" type="ORF">C17E4.3</name>
</gene>
<comment type="function">
    <text evidence="4">E3 ubiquitin-protein ligase which positively regulates the fast polyspermy block during fertilization, preventing entry of more than one sperm into the oocyte (PubMed:38278786). After fertilization, required in the zygote for the selective degradation of a subset of maternal membrane proteins including cav-1, chs-1 and rme-2, probably by mediating their K63-linked polyubiquitination (PubMed:38278786).</text>
</comment>
<comment type="catalytic activity">
    <reaction evidence="4">
        <text>S-ubiquitinyl-[E2 ubiquitin-conjugating enzyme]-L-cysteine + [acceptor protein]-L-lysine = [E2 ubiquitin-conjugating enzyme]-L-cysteine + N(6)-ubiquitinyl-[acceptor protein]-L-lysine.</text>
        <dbReference type="EC" id="2.3.2.27"/>
    </reaction>
</comment>
<comment type="pathway">
    <text evidence="4">Protein modification; protein ubiquitination.</text>
</comment>
<comment type="subcellular location">
    <subcellularLocation>
        <location evidence="4">Cell membrane</location>
        <topology evidence="1">Multi-pass membrane protein</topology>
    </subcellularLocation>
    <subcellularLocation>
        <location evidence="4">Endosome membrane</location>
        <topology evidence="1">Multi-pass membrane protein</topology>
    </subcellularLocation>
</comment>
<comment type="domain">
    <text evidence="2 4">The RING-CH-type zinc finger domain is required for E3 ligase activity (By similarity) (PubMed:38278786). It is also required to prevent polyspermy (PubMed:38278786).</text>
</comment>
<comment type="disruption phenotype">
    <text evidence="4">RNAi-mediated knockdown results in delayed degradation of the maternal plasma membrane protein cav-1.</text>
</comment>
<feature type="chain" id="PRO_0000460463" description="E3 ubiquitin-protein ligase marc-3">
    <location>
        <begin position="1"/>
        <end position="431"/>
    </location>
</feature>
<feature type="transmembrane region" description="Helical" evidence="1">
    <location>
        <begin position="98"/>
        <end position="118"/>
    </location>
</feature>
<feature type="transmembrane region" description="Helical" evidence="1">
    <location>
        <begin position="157"/>
        <end position="177"/>
    </location>
</feature>
<feature type="zinc finger region" description="RING-CH-type" evidence="2">
    <location>
        <begin position="5"/>
        <end position="74"/>
    </location>
</feature>
<feature type="region of interest" description="Disordered" evidence="3">
    <location>
        <begin position="267"/>
        <end position="289"/>
    </location>
</feature>
<feature type="region of interest" description="Disordered" evidence="3">
    <location>
        <begin position="327"/>
        <end position="349"/>
    </location>
</feature>
<feature type="compositionally biased region" description="Basic and acidic residues" evidence="3">
    <location>
        <begin position="273"/>
        <end position="282"/>
    </location>
</feature>
<feature type="binding site" evidence="2">
    <location>
        <position position="13"/>
    </location>
    <ligand>
        <name>Zn(2+)</name>
        <dbReference type="ChEBI" id="CHEBI:29105"/>
        <label>1</label>
    </ligand>
</feature>
<feature type="binding site" evidence="2">
    <location>
        <position position="16"/>
    </location>
    <ligand>
        <name>Zn(2+)</name>
        <dbReference type="ChEBI" id="CHEBI:29105"/>
        <label>1</label>
    </ligand>
</feature>
<feature type="binding site" evidence="2">
    <location>
        <position position="38"/>
    </location>
    <ligand>
        <name>Zn(2+)</name>
        <dbReference type="ChEBI" id="CHEBI:29105"/>
        <label>2</label>
    </ligand>
</feature>
<feature type="binding site" evidence="2">
    <location>
        <position position="40"/>
    </location>
    <ligand>
        <name>Zn(2+)</name>
        <dbReference type="ChEBI" id="CHEBI:29105"/>
        <label>2</label>
    </ligand>
</feature>
<feature type="binding site" evidence="2">
    <location>
        <position position="48"/>
    </location>
    <ligand>
        <name>Zn(2+)</name>
        <dbReference type="ChEBI" id="CHEBI:29105"/>
        <label>1</label>
    </ligand>
</feature>
<feature type="binding site" evidence="2">
    <location>
        <position position="51"/>
    </location>
    <ligand>
        <name>Zn(2+)</name>
        <dbReference type="ChEBI" id="CHEBI:29105"/>
        <label>1</label>
    </ligand>
</feature>
<feature type="binding site" evidence="2">
    <location>
        <position position="64"/>
    </location>
    <ligand>
        <name>Zn(2+)</name>
        <dbReference type="ChEBI" id="CHEBI:29105"/>
        <label>2</label>
    </ligand>
</feature>
<feature type="binding site" evidence="2">
    <location>
        <position position="67"/>
    </location>
    <ligand>
        <name>Zn(2+)</name>
        <dbReference type="ChEBI" id="CHEBI:29105"/>
        <label>2</label>
    </ligand>
</feature>
<feature type="mutagenesis site" description="In marc-3(syb5493); 18% of zygotes display a polyspermy phenotype." evidence="4">
    <location>
        <begin position="7"/>
        <end position="431"/>
    </location>
</feature>
<feature type="mutagenesis site" description="Loss of in vitro autoubiquitination activity." evidence="4">
    <original>C</original>
    <variation>S</variation>
    <location>
        <position position="38"/>
    </location>
</feature>
<name>MARC3_CAEEL</name>
<protein>
    <recommendedName>
        <fullName evidence="6">E3 ubiquitin-protein ligase marc-3</fullName>
        <ecNumber evidence="4">2.3.2.27</ecNumber>
    </recommendedName>
</protein>
<proteinExistence type="evidence at protein level"/>
<sequence>MEDFNASLGPAVCRICMCGETSIPYLGQQAGEPLISPCKCSGTMGLFHRSCLEHWLTLTSTTNCEICKFAFKIKQKSRNFIDYIRQGGYKKLQSNRNPFIDFAFVLLILPFAFFGVFMSVEGALYAGRKYHYAFENRDNDENGNLEVRNQTSLECALFLFVALLLFSAFITLVVSALWHHFRQYKIWQAKNKIMFVVDQLDAEQSMHFNPQWKKQGGGWKEKIAKFWGEIRRRPTRAYIPEIARNDSIPIEPVVGISPVLVANFNRTSPDSNNTHHHDESRNEIPFGRRTPEQAICVSMSSTPQMYAEKLEKLTLSPIGLDDLFANSRATSTRRESGISPESSSRRDMRKTHSVYSVCSSFGTGVMSCSTPVADNNLRTLTPSPISLSTFKSGCPTEPVVAINLNDSGDTVTIDSQRGRFHVETLENDYNS</sequence>
<organism evidence="7">
    <name type="scientific">Caenorhabditis elegans</name>
    <dbReference type="NCBI Taxonomy" id="6239"/>
    <lineage>
        <taxon>Eukaryota</taxon>
        <taxon>Metazoa</taxon>
        <taxon>Ecdysozoa</taxon>
        <taxon>Nematoda</taxon>
        <taxon>Chromadorea</taxon>
        <taxon>Rhabditida</taxon>
        <taxon>Rhabditina</taxon>
        <taxon>Rhabditomorpha</taxon>
        <taxon>Rhabditoidea</taxon>
        <taxon>Rhabditidae</taxon>
        <taxon>Peloderinae</taxon>
        <taxon>Caenorhabditis</taxon>
    </lineage>
</organism>
<reference evidence="7" key="1">
    <citation type="journal article" date="1998" name="Science">
        <title>Genome sequence of the nematode C. elegans: a platform for investigating biology.</title>
        <authorList>
            <consortium name="The C. elegans sequencing consortium"/>
        </authorList>
    </citation>
    <scope>NUCLEOTIDE SEQUENCE [LARGE SCALE GENOMIC DNA]</scope>
    <source>
        <strain evidence="7">Bristol N2</strain>
    </source>
</reference>
<reference evidence="6" key="2">
    <citation type="journal article" date="2024" name="Nat. Commun.">
        <title>MARC-3, a membrane-associated ubiquitin ligase, is required for fast polyspermy block in Caenorhabditis elegans.</title>
        <authorList>
            <person name="Kawasaki I."/>
            <person name="Sugiura K."/>
            <person name="Sasaki T."/>
            <person name="Matsuda N."/>
            <person name="Sato M."/>
            <person name="Sato K."/>
        </authorList>
    </citation>
    <scope>FUNCTION</scope>
    <scope>CATALYTIC ACTIVITY</scope>
    <scope>PATHWAY</scope>
    <scope>SUBCELLULAR LOCATION</scope>
    <scope>DOMAIN</scope>
    <scope>DISRUPTION PHENOTYPE</scope>
    <scope>MUTAGENESIS OF 7-SER--SER-431 AND CYS-38</scope>
</reference>
<accession>Q93227</accession>